<evidence type="ECO:0000250" key="1">
    <source>
        <dbReference type="UniProtKB" id="Q9Y399"/>
    </source>
</evidence>
<evidence type="ECO:0000256" key="2">
    <source>
        <dbReference type="SAM" id="MobiDB-lite"/>
    </source>
</evidence>
<evidence type="ECO:0000269" key="3">
    <source>
    </source>
</evidence>
<evidence type="ECO:0000269" key="4">
    <source>
    </source>
</evidence>
<evidence type="ECO:0000305" key="5"/>
<evidence type="ECO:0007744" key="6">
    <source>
        <dbReference type="PDB" id="3JD5"/>
    </source>
</evidence>
<evidence type="ECO:0007829" key="7">
    <source>
        <dbReference type="PDB" id="6NEQ"/>
    </source>
</evidence>
<evidence type="ECO:0007829" key="8">
    <source>
        <dbReference type="PDB" id="6NF8"/>
    </source>
</evidence>
<organism>
    <name type="scientific">Bos taurus</name>
    <name type="common">Bovine</name>
    <dbReference type="NCBI Taxonomy" id="9913"/>
    <lineage>
        <taxon>Eukaryota</taxon>
        <taxon>Metazoa</taxon>
        <taxon>Chordata</taxon>
        <taxon>Craniata</taxon>
        <taxon>Vertebrata</taxon>
        <taxon>Euteleostomi</taxon>
        <taxon>Mammalia</taxon>
        <taxon>Eutheria</taxon>
        <taxon>Laurasiatheria</taxon>
        <taxon>Artiodactyla</taxon>
        <taxon>Ruminantia</taxon>
        <taxon>Pecora</taxon>
        <taxon>Bovidae</taxon>
        <taxon>Bovinae</taxon>
        <taxon>Bos</taxon>
    </lineage>
</organism>
<name>RT02_BOVIN</name>
<reference key="1">
    <citation type="submission" date="2007-06" db="EMBL/GenBank/DDBJ databases">
        <authorList>
            <consortium name="NIH - Mammalian Gene Collection (MGC) project"/>
        </authorList>
    </citation>
    <scope>NUCLEOTIDE SEQUENCE [LARGE SCALE MRNA]</scope>
    <source>
        <strain>Crossbred X Angus</strain>
        <tissue>Liver</tissue>
    </source>
</reference>
<reference key="2">
    <citation type="journal article" date="2001" name="J. Biol. Chem.">
        <title>The small subunit of the mammalian mitochondrial ribosome: identification of the full complement of ribosomal proteins present.</title>
        <authorList>
            <person name="Koc E.C."/>
            <person name="Burkhart W."/>
            <person name="Blackburn K."/>
            <person name="Moseley A."/>
            <person name="Spremulli L.L."/>
        </authorList>
    </citation>
    <scope>PROTEIN SEQUENCE OF 90-99</scope>
    <scope>SUBUNIT</scope>
    <scope>SUBCELLULAR LOCATION</scope>
    <source>
        <tissue>Liver</tissue>
    </source>
</reference>
<reference evidence="6" key="3">
    <citation type="journal article" date="2014" name="Proc. Natl. Acad. Sci. U.S.A.">
        <title>Cryo-EM structure of the small subunit of the mammalian mitochondrial ribosome.</title>
        <authorList>
            <person name="Kaushal P.S."/>
            <person name="Sharma M.R."/>
            <person name="Booth T.M."/>
            <person name="Haque E.M."/>
            <person name="Tung C.S."/>
            <person name="Sanbonmatsu K.Y."/>
            <person name="Spremulli L.L."/>
            <person name="Agrawal R.K."/>
        </authorList>
    </citation>
    <scope>STRUCTURE BY ELECTRON MICROSCOPY (7.00 ANGSTROMS)</scope>
    <scope>SUBCELLULAR LOCATION</scope>
    <scope>SUBUNIT</scope>
</reference>
<proteinExistence type="evidence at protein level"/>
<sequence length="293" mass="31729">MATGAVLPRLLGAGVRAAPRGRAAQRGRTLGSAAAAAAREPERDSDRSARILSEPLKHSDFFNVKELFSVRSLFNARVHLGHKAGCRHRFMEPYIFGSRLGQDIIDLEQTATHLQLALNFTAHVAFRGGIILFVSRARQFSHLIESTARSCGEYAHTRYFKGGLLTNAPLLLGARVRLPDLIIFLHTLNNVFEPHVAVRDAAKMSIPTVGVVDTNCNPCLITYPVPGNDDSPPAVQLFCQLFQTAVTRAKEKRRQLEALYRLQGAPGPHPANPAAPGAPSPGAQAQLGMGHSP</sequence>
<keyword id="KW-0002">3D-structure</keyword>
<keyword id="KW-0903">Direct protein sequencing</keyword>
<keyword id="KW-0496">Mitochondrion</keyword>
<keyword id="KW-1185">Reference proteome</keyword>
<keyword id="KW-0687">Ribonucleoprotein</keyword>
<keyword id="KW-0689">Ribosomal protein</keyword>
<protein>
    <recommendedName>
        <fullName evidence="5">Small ribosomal subunit protein uS2m</fullName>
    </recommendedName>
    <alternativeName>
        <fullName>28S ribosomal protein S2, mitochondrial</fullName>
        <shortName>MRP-S2</shortName>
        <shortName>S2mt</shortName>
    </alternativeName>
</protein>
<feature type="chain" id="PRO_0000134342" description="Small ribosomal subunit protein uS2m">
    <location>
        <begin position="1"/>
        <end position="293"/>
    </location>
</feature>
<feature type="region of interest" description="Disordered" evidence="2">
    <location>
        <begin position="21"/>
        <end position="49"/>
    </location>
</feature>
<feature type="region of interest" description="Disordered" evidence="2">
    <location>
        <begin position="263"/>
        <end position="293"/>
    </location>
</feature>
<feature type="compositionally biased region" description="Low complexity" evidence="2">
    <location>
        <begin position="21"/>
        <end position="38"/>
    </location>
</feature>
<feature type="compositionally biased region" description="Basic and acidic residues" evidence="2">
    <location>
        <begin position="39"/>
        <end position="49"/>
    </location>
</feature>
<feature type="compositionally biased region" description="Pro residues" evidence="2">
    <location>
        <begin position="267"/>
        <end position="279"/>
    </location>
</feature>
<feature type="helix" evidence="7">
    <location>
        <begin position="50"/>
        <end position="53"/>
    </location>
</feature>
<feature type="turn" evidence="7">
    <location>
        <begin position="55"/>
        <end position="57"/>
    </location>
</feature>
<feature type="strand" evidence="7">
    <location>
        <begin position="58"/>
        <end position="62"/>
    </location>
</feature>
<feature type="helix" evidence="8">
    <location>
        <begin position="65"/>
        <end position="67"/>
    </location>
</feature>
<feature type="helix" evidence="7">
    <location>
        <begin position="70"/>
        <end position="75"/>
    </location>
</feature>
<feature type="strand" evidence="7">
    <location>
        <begin position="84"/>
        <end position="86"/>
    </location>
</feature>
<feature type="helix" evidence="7">
    <location>
        <begin position="89"/>
        <end position="91"/>
    </location>
</feature>
<feature type="turn" evidence="7">
    <location>
        <begin position="92"/>
        <end position="94"/>
    </location>
</feature>
<feature type="strand" evidence="7">
    <location>
        <begin position="95"/>
        <end position="99"/>
    </location>
</feature>
<feature type="strand" evidence="7">
    <location>
        <begin position="102"/>
        <end position="105"/>
    </location>
</feature>
<feature type="helix" evidence="7">
    <location>
        <begin position="107"/>
        <end position="126"/>
    </location>
</feature>
<feature type="strand" evidence="7">
    <location>
        <begin position="131"/>
        <end position="134"/>
    </location>
</feature>
<feature type="turn" evidence="7">
    <location>
        <begin position="138"/>
        <end position="140"/>
    </location>
</feature>
<feature type="helix" evidence="7">
    <location>
        <begin position="141"/>
        <end position="151"/>
    </location>
</feature>
<feature type="strand" evidence="7">
    <location>
        <begin position="154"/>
        <end position="156"/>
    </location>
</feature>
<feature type="strand" evidence="7">
    <location>
        <begin position="162"/>
        <end position="167"/>
    </location>
</feature>
<feature type="helix" evidence="7">
    <location>
        <begin position="168"/>
        <end position="171"/>
    </location>
</feature>
<feature type="strand" evidence="7">
    <location>
        <begin position="180"/>
        <end position="185"/>
    </location>
</feature>
<feature type="strand" evidence="7">
    <location>
        <begin position="192"/>
        <end position="194"/>
    </location>
</feature>
<feature type="helix" evidence="7">
    <location>
        <begin position="196"/>
        <end position="203"/>
    </location>
</feature>
<feature type="strand" evidence="7">
    <location>
        <begin position="208"/>
        <end position="210"/>
    </location>
</feature>
<feature type="strand" evidence="8">
    <location>
        <begin position="214"/>
        <end position="216"/>
    </location>
</feature>
<feature type="turn" evidence="8">
    <location>
        <begin position="218"/>
        <end position="220"/>
    </location>
</feature>
<feature type="helix" evidence="7">
    <location>
        <begin position="232"/>
        <end position="260"/>
    </location>
</feature>
<gene>
    <name type="primary">MRPS2</name>
</gene>
<dbReference type="EMBL" id="BC146028">
    <property type="protein sequence ID" value="AAI46029.1"/>
    <property type="molecule type" value="mRNA"/>
</dbReference>
<dbReference type="RefSeq" id="NP_001092347.1">
    <property type="nucleotide sequence ID" value="NM_001098877.2"/>
</dbReference>
<dbReference type="PDB" id="3JD5">
    <property type="method" value="EM"/>
    <property type="resolution" value="7.00 A"/>
    <property type="chains" value="B=1-293"/>
</dbReference>
<dbReference type="PDB" id="6NEQ">
    <property type="method" value="EM"/>
    <property type="resolution" value="3.32 A"/>
    <property type="chains" value="B=1-293"/>
</dbReference>
<dbReference type="PDB" id="6NF8">
    <property type="method" value="EM"/>
    <property type="resolution" value="3.48 A"/>
    <property type="chains" value="B=1-293"/>
</dbReference>
<dbReference type="PDBsum" id="3JD5"/>
<dbReference type="PDBsum" id="6NEQ"/>
<dbReference type="PDBsum" id="6NF8"/>
<dbReference type="EMDB" id="EMD-9358"/>
<dbReference type="EMDB" id="EMD-9362"/>
<dbReference type="SMR" id="P82923"/>
<dbReference type="CORUM" id="P82923"/>
<dbReference type="FunCoup" id="P82923">
    <property type="interactions" value="1385"/>
</dbReference>
<dbReference type="IntAct" id="P82923">
    <property type="interactions" value="2"/>
</dbReference>
<dbReference type="STRING" id="9913.ENSBTAP00000067611"/>
<dbReference type="PaxDb" id="9913-ENSBTAP00000007473"/>
<dbReference type="Ensembl" id="ENSBTAT00000007473.6">
    <property type="protein sequence ID" value="ENSBTAP00000007473.5"/>
    <property type="gene ID" value="ENSBTAG00000005688.7"/>
</dbReference>
<dbReference type="GeneID" id="505681"/>
<dbReference type="KEGG" id="bta:505681"/>
<dbReference type="CTD" id="51116"/>
<dbReference type="VEuPathDB" id="HostDB:ENSBTAG00000005688"/>
<dbReference type="VGNC" id="VGNC:31660">
    <property type="gene designation" value="MRPS2"/>
</dbReference>
<dbReference type="eggNOG" id="KOG0832">
    <property type="taxonomic scope" value="Eukaryota"/>
</dbReference>
<dbReference type="GeneTree" id="ENSGT00390000017382"/>
<dbReference type="HOGENOM" id="CLU_040318_3_0_1"/>
<dbReference type="InParanoid" id="P82923"/>
<dbReference type="OMA" id="PYIFMEK"/>
<dbReference type="OrthoDB" id="2320368at2759"/>
<dbReference type="TreeFam" id="TF313480"/>
<dbReference type="Reactome" id="R-BTA-5389840">
    <property type="pathway name" value="Mitochondrial translation elongation"/>
</dbReference>
<dbReference type="Reactome" id="R-BTA-5419276">
    <property type="pathway name" value="Mitochondrial translation termination"/>
</dbReference>
<dbReference type="Reactome" id="R-BTA-9837999">
    <property type="pathway name" value="Mitochondrial protein degradation"/>
</dbReference>
<dbReference type="Proteomes" id="UP000009136">
    <property type="component" value="Chromosome 11"/>
</dbReference>
<dbReference type="Bgee" id="ENSBTAG00000005688">
    <property type="expression patterns" value="Expressed in laryngeal cartilage and 105 other cell types or tissues"/>
</dbReference>
<dbReference type="GO" id="GO:0005743">
    <property type="term" value="C:mitochondrial inner membrane"/>
    <property type="evidence" value="ECO:0000304"/>
    <property type="project" value="Reactome"/>
</dbReference>
<dbReference type="GO" id="GO:0005763">
    <property type="term" value="C:mitochondrial small ribosomal subunit"/>
    <property type="evidence" value="ECO:0000314"/>
    <property type="project" value="UniProtKB"/>
</dbReference>
<dbReference type="GO" id="GO:0003735">
    <property type="term" value="F:structural constituent of ribosome"/>
    <property type="evidence" value="ECO:0007005"/>
    <property type="project" value="UniProtKB"/>
</dbReference>
<dbReference type="GO" id="GO:0061668">
    <property type="term" value="P:mitochondrial ribosome assembly"/>
    <property type="evidence" value="ECO:0000250"/>
    <property type="project" value="UniProtKB"/>
</dbReference>
<dbReference type="GO" id="GO:0032543">
    <property type="term" value="P:mitochondrial translation"/>
    <property type="evidence" value="ECO:0007005"/>
    <property type="project" value="UniProtKB"/>
</dbReference>
<dbReference type="CDD" id="cd01425">
    <property type="entry name" value="RPS2"/>
    <property type="match status" value="1"/>
</dbReference>
<dbReference type="FunFam" id="3.40.50.10490:FF:000026">
    <property type="entry name" value="28S ribosomal protein S2, mitochondrial"/>
    <property type="match status" value="1"/>
</dbReference>
<dbReference type="Gene3D" id="3.40.50.10490">
    <property type="entry name" value="Glucose-6-phosphate isomerase like protein, domain 1"/>
    <property type="match status" value="1"/>
</dbReference>
<dbReference type="HAMAP" id="MF_00291_B">
    <property type="entry name" value="Ribosomal_uS2_B"/>
    <property type="match status" value="1"/>
</dbReference>
<dbReference type="InterPro" id="IPR001865">
    <property type="entry name" value="Ribosomal_uS2"/>
</dbReference>
<dbReference type="InterPro" id="IPR005706">
    <property type="entry name" value="Ribosomal_uS2_bac/mit/plastid"/>
</dbReference>
<dbReference type="InterPro" id="IPR018130">
    <property type="entry name" value="Ribosomal_uS2_CS"/>
</dbReference>
<dbReference type="InterPro" id="IPR023591">
    <property type="entry name" value="Ribosomal_uS2_flav_dom_sf"/>
</dbReference>
<dbReference type="PANTHER" id="PTHR12534">
    <property type="entry name" value="30S RIBOSOMAL PROTEIN S2 PROKARYOTIC AND ORGANELLAR"/>
    <property type="match status" value="1"/>
</dbReference>
<dbReference type="PANTHER" id="PTHR12534:SF0">
    <property type="entry name" value="SMALL RIBOSOMAL SUBUNIT PROTEIN US2M"/>
    <property type="match status" value="1"/>
</dbReference>
<dbReference type="Pfam" id="PF00318">
    <property type="entry name" value="Ribosomal_S2"/>
    <property type="match status" value="2"/>
</dbReference>
<dbReference type="PRINTS" id="PR00395">
    <property type="entry name" value="RIBOSOMALS2"/>
</dbReference>
<dbReference type="SUPFAM" id="SSF52313">
    <property type="entry name" value="Ribosomal protein S2"/>
    <property type="match status" value="1"/>
</dbReference>
<dbReference type="PROSITE" id="PS00962">
    <property type="entry name" value="RIBOSOMAL_S2_1"/>
    <property type="match status" value="1"/>
</dbReference>
<accession>P82923</accession>
<accession>A6H6X0</accession>
<comment type="function">
    <text evidence="1">Required for mitoribosome formation and stability, and mitochondrial translation.</text>
</comment>
<comment type="subunit">
    <text evidence="3 4">Component of the mitochondrial ribosome small subunit (28S) which comprises a 12S rRNA and about 30 distinct proteins.</text>
</comment>
<comment type="subcellular location">
    <subcellularLocation>
        <location evidence="3 4">Mitochondrion</location>
    </subcellularLocation>
</comment>
<comment type="similarity">
    <text evidence="5">Belongs to the universal ribosomal protein uS2 family.</text>
</comment>